<reference key="1">
    <citation type="submission" date="1998-08" db="EMBL/GenBank/DDBJ databases">
        <title>Tomato leaf curl geminivirus replication is cell cycle dependent.</title>
        <authorList>
            <person name="Padidam M."/>
            <person name="Beachy R.N."/>
            <person name="Fauquet C.M."/>
        </authorList>
    </citation>
    <scope>NUCLEOTIDE SEQUENCE [MRNA]</scope>
    <source>
        <strain>cv. Bright Yellow 2</strain>
    </source>
</reference>
<reference key="2">
    <citation type="online journal article" date="1999" name="Plant Gene Register">
        <title>Nucleotide sequence of an Nicotiana tabacum cDNA clone encoding a homolog of proliferating cell nuclear antigen.</title>
        <authorList>
            <person name="Park S.-C."/>
            <person name="Park E.-H."/>
            <person name="Cho J.W."/>
        </authorList>
        <locator>PGR99-022</locator>
    </citation>
    <scope>NUCLEOTIDE SEQUENCE [MRNA]</scope>
</reference>
<reference key="3">
    <citation type="submission" date="1999-03" db="EMBL/GenBank/DDBJ databases">
        <authorList>
            <person name="Ito M."/>
        </authorList>
    </citation>
    <scope>NUCLEOTIDE SEQUENCE [MRNA]</scope>
    <source>
        <strain>cv. Bright Yellow 2</strain>
    </source>
</reference>
<feature type="chain" id="PRO_0000149188" description="Proliferating cell nuclear antigen">
    <location>
        <begin position="1"/>
        <end position="264"/>
    </location>
</feature>
<feature type="DNA-binding region" evidence="2">
    <location>
        <begin position="61"/>
        <end position="80"/>
    </location>
</feature>
<organism>
    <name type="scientific">Nicotiana tabacum</name>
    <name type="common">Common tobacco</name>
    <dbReference type="NCBI Taxonomy" id="4097"/>
    <lineage>
        <taxon>Eukaryota</taxon>
        <taxon>Viridiplantae</taxon>
        <taxon>Streptophyta</taxon>
        <taxon>Embryophyta</taxon>
        <taxon>Tracheophyta</taxon>
        <taxon>Spermatophyta</taxon>
        <taxon>Magnoliopsida</taxon>
        <taxon>eudicotyledons</taxon>
        <taxon>Gunneridae</taxon>
        <taxon>Pentapetalae</taxon>
        <taxon>asterids</taxon>
        <taxon>lamiids</taxon>
        <taxon>Solanales</taxon>
        <taxon>Solanaceae</taxon>
        <taxon>Nicotianoideae</taxon>
        <taxon>Nicotianeae</taxon>
        <taxon>Nicotiana</taxon>
    </lineage>
</organism>
<gene>
    <name type="primary">PCNA</name>
</gene>
<keyword id="KW-0235">DNA replication</keyword>
<keyword id="KW-0238">DNA-binding</keyword>
<keyword id="KW-0539">Nucleus</keyword>
<keyword id="KW-1185">Reference proteome</keyword>
<protein>
    <recommendedName>
        <fullName>Proliferating cell nuclear antigen</fullName>
        <shortName>PCNA</shortName>
    </recommendedName>
</protein>
<comment type="function">
    <text evidence="1">This protein is an auxiliary protein of DNA polymerase delta and is involved in the control of eukaryotic DNA replication by increasing the polymerase's processibility during elongation of the leading strand.</text>
</comment>
<comment type="subcellular location">
    <subcellularLocation>
        <location>Nucleus</location>
    </subcellularLocation>
</comment>
<comment type="similarity">
    <text evidence="3">Belongs to the PCNA family.</text>
</comment>
<sequence length="264" mass="29272">MLELRLVQGSLLKKVLESIKDLVNDANFDCSATGFSLQAMDSSHVALVALLLRSEGFEHYRCDRNISMGMNLANMAKMLKCAGNDDIITLKADDGSDTVTFMFESPTQDKIADFEMKLMDIDSEHLGIPEAEYHAIVRMPSAEFSRICKDLSSIGDTVVISVTKEGVKFSTRGDIGTANIVCRQNTTVDKPEEATVIEMNEPVSLTFALRYLNSFTKATPLSNTVTISLSSELPVVVEYKIAEMGYIRFYLAPKIEEDEEETKP</sequence>
<evidence type="ECO:0000250" key="1"/>
<evidence type="ECO:0000255" key="2"/>
<evidence type="ECO:0000305" key="3"/>
<dbReference type="EMBL" id="AF085197">
    <property type="protein sequence ID" value="AAC34126.1"/>
    <property type="molecule type" value="mRNA"/>
</dbReference>
<dbReference type="EMBL" id="AF038875">
    <property type="protein sequence ID" value="AAC27992.1"/>
    <property type="molecule type" value="mRNA"/>
</dbReference>
<dbReference type="EMBL" id="AB025029">
    <property type="protein sequence ID" value="BAA76349.1"/>
    <property type="molecule type" value="mRNA"/>
</dbReference>
<dbReference type="RefSeq" id="NP_001312213.1">
    <property type="nucleotide sequence ID" value="NM_001325284.1"/>
</dbReference>
<dbReference type="SMR" id="O82797"/>
<dbReference type="STRING" id="4097.O82797"/>
<dbReference type="PaxDb" id="4097-O82797"/>
<dbReference type="GeneID" id="107779602"/>
<dbReference type="KEGG" id="nta:107779602"/>
<dbReference type="OMA" id="EMKLINM"/>
<dbReference type="OrthoDB" id="534348at2759"/>
<dbReference type="PhylomeDB" id="O82797"/>
<dbReference type="Proteomes" id="UP000084051">
    <property type="component" value="Unplaced"/>
</dbReference>
<dbReference type="GO" id="GO:0043626">
    <property type="term" value="C:PCNA complex"/>
    <property type="evidence" value="ECO:0000318"/>
    <property type="project" value="GO_Central"/>
</dbReference>
<dbReference type="GO" id="GO:0003677">
    <property type="term" value="F:DNA binding"/>
    <property type="evidence" value="ECO:0007669"/>
    <property type="project" value="UniProtKB-KW"/>
</dbReference>
<dbReference type="GO" id="GO:0030337">
    <property type="term" value="F:DNA polymerase processivity factor activity"/>
    <property type="evidence" value="ECO:0000318"/>
    <property type="project" value="GO_Central"/>
</dbReference>
<dbReference type="GO" id="GO:0006272">
    <property type="term" value="P:leading strand elongation"/>
    <property type="evidence" value="ECO:0000318"/>
    <property type="project" value="GO_Central"/>
</dbReference>
<dbReference type="GO" id="GO:0006298">
    <property type="term" value="P:mismatch repair"/>
    <property type="evidence" value="ECO:0000318"/>
    <property type="project" value="GO_Central"/>
</dbReference>
<dbReference type="GO" id="GO:0006275">
    <property type="term" value="P:regulation of DNA replication"/>
    <property type="evidence" value="ECO:0007669"/>
    <property type="project" value="InterPro"/>
</dbReference>
<dbReference type="GO" id="GO:0019985">
    <property type="term" value="P:translesion synthesis"/>
    <property type="evidence" value="ECO:0000318"/>
    <property type="project" value="GO_Central"/>
</dbReference>
<dbReference type="CDD" id="cd00577">
    <property type="entry name" value="PCNA"/>
    <property type="match status" value="1"/>
</dbReference>
<dbReference type="FunFam" id="3.70.10.10:FF:000001">
    <property type="entry name" value="Proliferating cell nuclear antigen"/>
    <property type="match status" value="1"/>
</dbReference>
<dbReference type="Gene3D" id="3.70.10.10">
    <property type="match status" value="1"/>
</dbReference>
<dbReference type="HAMAP" id="MF_00317">
    <property type="entry name" value="DNApol_clamp_arch"/>
    <property type="match status" value="1"/>
</dbReference>
<dbReference type="InterPro" id="IPR046938">
    <property type="entry name" value="DNA_clamp_sf"/>
</dbReference>
<dbReference type="InterPro" id="IPR000730">
    <property type="entry name" value="Pr_cel_nuc_antig"/>
</dbReference>
<dbReference type="InterPro" id="IPR022649">
    <property type="entry name" value="Pr_cel_nuc_antig_C"/>
</dbReference>
<dbReference type="InterPro" id="IPR022659">
    <property type="entry name" value="Pr_cel_nuc_antig_CS"/>
</dbReference>
<dbReference type="InterPro" id="IPR022648">
    <property type="entry name" value="Pr_cel_nuc_antig_N"/>
</dbReference>
<dbReference type="NCBIfam" id="TIGR00590">
    <property type="entry name" value="pcna"/>
    <property type="match status" value="1"/>
</dbReference>
<dbReference type="PANTHER" id="PTHR11352">
    <property type="entry name" value="PROLIFERATING CELL NUCLEAR ANTIGEN"/>
    <property type="match status" value="1"/>
</dbReference>
<dbReference type="PANTHER" id="PTHR11352:SF0">
    <property type="entry name" value="PROLIFERATING CELL NUCLEAR ANTIGEN"/>
    <property type="match status" value="1"/>
</dbReference>
<dbReference type="Pfam" id="PF02747">
    <property type="entry name" value="PCNA_C"/>
    <property type="match status" value="1"/>
</dbReference>
<dbReference type="Pfam" id="PF00705">
    <property type="entry name" value="PCNA_N"/>
    <property type="match status" value="1"/>
</dbReference>
<dbReference type="PRINTS" id="PR00339">
    <property type="entry name" value="PCNACYCLIN"/>
</dbReference>
<dbReference type="SUPFAM" id="SSF55979">
    <property type="entry name" value="DNA clamp"/>
    <property type="match status" value="2"/>
</dbReference>
<dbReference type="PROSITE" id="PS01251">
    <property type="entry name" value="PCNA_1"/>
    <property type="match status" value="1"/>
</dbReference>
<dbReference type="PROSITE" id="PS00293">
    <property type="entry name" value="PCNA_2"/>
    <property type="match status" value="1"/>
</dbReference>
<name>PCNA_TOBAC</name>
<proteinExistence type="evidence at transcript level"/>
<accession>O82797</accession>